<proteinExistence type="evidence at transcript level"/>
<keyword id="KW-0175">Coiled coil</keyword>
<keyword id="KW-1185">Reference proteome</keyword>
<feature type="chain" id="PRO_0000280753" description="Cancer-associated gene 1 protein homolog">
    <location>
        <begin position="1"/>
        <end position="847"/>
    </location>
</feature>
<feature type="region of interest" description="Disordered" evidence="2">
    <location>
        <begin position="118"/>
        <end position="161"/>
    </location>
</feature>
<feature type="coiled-coil region" evidence="1">
    <location>
        <begin position="377"/>
        <end position="567"/>
    </location>
</feature>
<organism>
    <name type="scientific">Rattus norvegicus</name>
    <name type="common">Rat</name>
    <dbReference type="NCBI Taxonomy" id="10116"/>
    <lineage>
        <taxon>Eukaryota</taxon>
        <taxon>Metazoa</taxon>
        <taxon>Chordata</taxon>
        <taxon>Craniata</taxon>
        <taxon>Vertebrata</taxon>
        <taxon>Euteleostomi</taxon>
        <taxon>Mammalia</taxon>
        <taxon>Eutheria</taxon>
        <taxon>Euarchontoglires</taxon>
        <taxon>Glires</taxon>
        <taxon>Rodentia</taxon>
        <taxon>Myomorpha</taxon>
        <taxon>Muroidea</taxon>
        <taxon>Muridae</taxon>
        <taxon>Murinae</taxon>
        <taxon>Rattus</taxon>
    </lineage>
</organism>
<protein>
    <recommendedName>
        <fullName>Cancer-associated gene 1 protein homolog</fullName>
        <shortName>CAGE-1</shortName>
    </recommendedName>
    <alternativeName>
        <fullName>Cancer/testis antigen 3 homolog</fullName>
        <shortName>CT3 homolog</shortName>
    </alternativeName>
</protein>
<sequence>MSETETMNVNGPQDFYSDSPFCLEASFSSSDLLQNETKNVKRGNESVHMSSEDILSTEGSLLGDINLGNYPERIQNQPANTRVSSSRQFEPICKFHWIDAFNDDSSVPDLTRAFSYSEEKPELQSQVYNDPADASQKPDPLKEESLMESSTSENKDELVHEPVRKSRSLCLNHYRGKTRPLTETPLVRSVVVDVALNNNQPESFLGKENVCRNGENLSDSENCFDQLDLRAIYKAGKPEVSSKGIQNSGEFSDMSVGPQEEVTEDGLDSLAITSPWSPAGIFKGRRSQDDFQMPDGELDFESLEPLEEDMALNEALQKLKQTNKKQELQIQDLHGRNLTLESRVQELQTKVSKQHVLLDIINKLKVNVEELIDDKYNVILEKNDINKKLQDLQETSANTKKHLQESKKDQESLQLQVKKIKVHYVRLQERYIAEIQQKNRSVTQCLEIEKTLSKKDEELQRLQRHKGELEKATSSALDLLKREKEIREQEFLSFQEEFQRREKENLKERRKLKSRVEKLVAQVKSLLFTCESERAQTTALQQQVDALRLENLELRQQAAKREAQACTPSFEIIQPKEKLEEVVEPDVTQDTKGTHCNLFLNCSSCKENPELPSMKRTSPLTSRLHSLLALTIGLLTCQDLAIPDTELRQESKKANDIMLQRLKDCQLRKKDLDKELLKHRNRIATLKELIANEKALQDHTMEITDFDTEEVKNASEAPVLLTVKLDKYHSLNEELDFLITKLGDLLESKEDHYSRLIEENDKYRRHVGSLINKVTSYEEIIKCADQRLEISHSQIAHLEERNRHLEDLIRMPREKARGLRPRLDNHPKSMTLISHLEGHHKECSISM</sequence>
<evidence type="ECO:0000255" key="1"/>
<evidence type="ECO:0000256" key="2">
    <source>
        <dbReference type="SAM" id="MobiDB-lite"/>
    </source>
</evidence>
<reference key="1">
    <citation type="journal article" date="2004" name="Genome Res.">
        <title>The status, quality, and expansion of the NIH full-length cDNA project: the Mammalian Gene Collection (MGC).</title>
        <authorList>
            <consortium name="The MGC Project Team"/>
        </authorList>
    </citation>
    <scope>NUCLEOTIDE SEQUENCE [LARGE SCALE MRNA]</scope>
    <source>
        <tissue>Testis</tissue>
    </source>
</reference>
<accession>Q66HB6</accession>
<dbReference type="EMBL" id="BC081934">
    <property type="protein sequence ID" value="AAH81934.1"/>
    <property type="molecule type" value="mRNA"/>
</dbReference>
<dbReference type="RefSeq" id="NP_001012052.1">
    <property type="nucleotide sequence ID" value="NM_001012052.1"/>
</dbReference>
<dbReference type="RefSeq" id="XP_006253870.1">
    <property type="nucleotide sequence ID" value="XM_006253808.5"/>
</dbReference>
<dbReference type="SMR" id="Q66HB6"/>
<dbReference type="FunCoup" id="Q66HB6">
    <property type="interactions" value="57"/>
</dbReference>
<dbReference type="STRING" id="10116.ENSRNOP00000030214"/>
<dbReference type="iPTMnet" id="Q66HB6"/>
<dbReference type="PhosphoSitePlus" id="Q66HB6"/>
<dbReference type="PaxDb" id="10116-ENSRNOP00000030214"/>
<dbReference type="Ensembl" id="ENSRNOT00000038349.5">
    <property type="protein sequence ID" value="ENSRNOP00000030214.4"/>
    <property type="gene ID" value="ENSRNOG00000024111.6"/>
</dbReference>
<dbReference type="GeneID" id="306872"/>
<dbReference type="KEGG" id="rno:306872"/>
<dbReference type="UCSC" id="RGD:1306102">
    <property type="organism name" value="rat"/>
</dbReference>
<dbReference type="AGR" id="RGD:1306102"/>
<dbReference type="CTD" id="285782"/>
<dbReference type="RGD" id="1306102">
    <property type="gene designation" value="Cage1"/>
</dbReference>
<dbReference type="eggNOG" id="KOG3650">
    <property type="taxonomic scope" value="Eukaryota"/>
</dbReference>
<dbReference type="GeneTree" id="ENSGT00390000001805"/>
<dbReference type="HOGENOM" id="CLU_020636_0_0_1"/>
<dbReference type="InParanoid" id="Q66HB6"/>
<dbReference type="OMA" id="SKFTLCE"/>
<dbReference type="OrthoDB" id="9898225at2759"/>
<dbReference type="PhylomeDB" id="Q66HB6"/>
<dbReference type="TreeFam" id="TF337775"/>
<dbReference type="PRO" id="PR:Q66HB6"/>
<dbReference type="Proteomes" id="UP000002494">
    <property type="component" value="Chromosome 17"/>
</dbReference>
<dbReference type="Bgee" id="ENSRNOG00000024111">
    <property type="expression patterns" value="Expressed in testis and 19 other cell types or tissues"/>
</dbReference>
<dbReference type="InterPro" id="IPR052686">
    <property type="entry name" value="CAGE1_homolog"/>
</dbReference>
<dbReference type="InterPro" id="IPR029381">
    <property type="entry name" value="CAGE1_N"/>
</dbReference>
<dbReference type="PANTHER" id="PTHR36864">
    <property type="entry name" value="CANCER-ASSOCIATED GENE 1 PROTEIN"/>
    <property type="match status" value="1"/>
</dbReference>
<dbReference type="PANTHER" id="PTHR36864:SF1">
    <property type="entry name" value="CANCER-ASSOCIATED GENE 1 PROTEIN"/>
    <property type="match status" value="1"/>
</dbReference>
<dbReference type="Pfam" id="PF15066">
    <property type="entry name" value="CAGE1"/>
    <property type="match status" value="1"/>
</dbReference>
<gene>
    <name type="primary">Cage1</name>
    <name type="synonym">Ctag3</name>
</gene>
<name>CAGE1_RAT</name>